<keyword id="KW-0002">3D-structure</keyword>
<keyword id="KW-0167">Capsid protein</keyword>
<keyword id="KW-1185">Reference proteome</keyword>
<keyword id="KW-1142">T=3 icosahedral capsid protein</keyword>
<keyword id="KW-0946">Virion</keyword>
<accession>P17522</accession>
<reference key="1">
    <citation type="journal article" date="1989" name="J. Gen. Virol.">
        <title>Nucleotide sequence of potato leafroll luteovirus RNA.</title>
        <authorList>
            <person name="Mayo M.A."/>
            <person name="Robinson D.J."/>
            <person name="Jolly C.A."/>
            <person name="Hyman L."/>
        </authorList>
    </citation>
    <scope>NUCLEOTIDE SEQUENCE [GENOMIC RNA]</scope>
</reference>
<reference key="2">
    <citation type="journal article" date="1990" name="J. Gen. Virol.">
        <title>Expression of the genome of potato leafroll virus: readthrough of the coat protein termination codon in vivo.</title>
        <authorList>
            <person name="Bahner I."/>
            <person name="Lamb J."/>
            <person name="Mayo M.A."/>
            <person name="Hay R.T."/>
        </authorList>
    </citation>
    <scope>SUBCELLULAR LOCATION</scope>
</reference>
<reference key="3">
    <citation type="journal article" date="2000" name="Phytopathology">
        <title>Aphid Acquisition and Cellular Transport of Potato leafroll virus-like Particles Lacking P5 Readthrough Protein.</title>
        <authorList>
            <person name="Gildow F.E."/>
            <person name="Reavy B."/>
            <person name="Mayo M.A."/>
            <person name="Duncan G.H."/>
            <person name="Woodford J.A."/>
            <person name="Lamb J.W."/>
            <person name="Hay R.T."/>
        </authorList>
    </citation>
    <scope>SUBCELLULAR LOCATION</scope>
</reference>
<reference evidence="9" key="4">
    <citation type="journal article" date="2019" name="Structure">
        <title>Combining Transient Expression and Cryo-EM to Obtain High-Resolution Structures of Luteovirid Particles.</title>
        <authorList>
            <person name="Byrne M.J."/>
            <person name="Steele J.F.C."/>
            <person name="Hesketh E.L."/>
            <person name="Walden M."/>
            <person name="Thompson R.F."/>
            <person name="Lomonossoff G.P."/>
            <person name="Ranson N.A."/>
        </authorList>
    </citation>
    <scope>STRUCTURE BY ELECTRON MICROSCOPY (3.30 ANGSTROMS)</scope>
    <scope>FUNCTION</scope>
</reference>
<reference evidence="10" key="5">
    <citation type="journal article" date="2021" name="J. Struct. Biol.">
        <title>Crystal structure of the potato leafroll virus coat protein and implications for viral assembly.</title>
        <authorList>
            <person name="Adams M.C."/>
            <person name="Schiltz C.J."/>
            <person name="Heck M.L."/>
            <person name="Chappie J.S."/>
        </authorList>
    </citation>
    <scope>X-RAY CRYSTALLOGRAPHY (3.30 ANGSTROMS) OF 68-208</scope>
    <scope>FUNCTION</scope>
</reference>
<sequence>MSTVVVKGNVNGGVQQPRMRRRQSLRRRANRVQPVVMVTAPGQPRRRRRRRGGNRRSRRTGVPRGRGSSETFVFTKDNLVGNTQGSFTFGPSLSDCPAFKDGILKAYHEYKITSILLQFVSEASSTSSGSIAYELDPHCKVSSLQSYVNKFQITKGGAKTYQARMINGVEWHDSSEDQCRILWKGNGKSSDSAGSFRVTIKVALQNPK</sequence>
<protein>
    <recommendedName>
        <fullName>Major capsid protein</fullName>
    </recommendedName>
    <alternativeName>
        <fullName>Coat protein</fullName>
        <shortName>CP</shortName>
    </alternativeName>
    <alternativeName>
        <fullName evidence="7">P3</fullName>
    </alternativeName>
</protein>
<proteinExistence type="evidence at protein level"/>
<evidence type="ECO:0000250" key="1">
    <source>
        <dbReference type="UniProtKB" id="P17525"/>
    </source>
</evidence>
<evidence type="ECO:0000256" key="2">
    <source>
        <dbReference type="SAM" id="MobiDB-lite"/>
    </source>
</evidence>
<evidence type="ECO:0000269" key="3">
    <source>
    </source>
</evidence>
<evidence type="ECO:0000269" key="4">
    <source>
    </source>
</evidence>
<evidence type="ECO:0000269" key="5">
    <source>
    </source>
</evidence>
<evidence type="ECO:0000269" key="6">
    <source>
    </source>
</evidence>
<evidence type="ECO:0000303" key="7">
    <source>
    </source>
</evidence>
<evidence type="ECO:0000305" key="8"/>
<evidence type="ECO:0007744" key="9">
    <source>
        <dbReference type="PDB" id="6SCO"/>
    </source>
</evidence>
<evidence type="ECO:0007744" key="10">
    <source>
        <dbReference type="PDB" id="7RLM"/>
    </source>
</evidence>
<evidence type="ECO:0007829" key="11">
    <source>
        <dbReference type="PDB" id="6SCO"/>
    </source>
</evidence>
<evidence type="ECO:0007829" key="12">
    <source>
        <dbReference type="PDB" id="7RLM"/>
    </source>
</evidence>
<comment type="function">
    <text evidence="5 6">Major capsid protein that self-assembles to form an icosahedral capsid with a T=3 symmetry, about 23 nm in diameter, and consisting of 180 capsid proteins monomers (PubMed:31611039, PubMed:34813955). Most of the 180 monomers are the major capsid protein, but a small percentage contain the minor capsid protein, which has a long C-terminal extension (PubMed:31611039).</text>
</comment>
<comment type="subcellular location">
    <subcellularLocation>
        <location evidence="3 4">Virion</location>
    </subcellularLocation>
</comment>
<comment type="domain">
    <text evidence="1">The N-terminus like those of many plant virus capsid proteins is highly basic. These regions may be involved in protein-RNA interaction.</text>
</comment>
<comment type="similarity">
    <text evidence="8">Belongs to the luteoviruses capsid protein family.</text>
</comment>
<name>CAPSD_PLRV1</name>
<dbReference type="EMBL" id="D00530">
    <property type="protein sequence ID" value="BAA00419.1"/>
    <property type="molecule type" value="Genomic_RNA"/>
</dbReference>
<dbReference type="PIR" id="JA0122">
    <property type="entry name" value="WMVQ53"/>
</dbReference>
<dbReference type="PIR" id="S24593">
    <property type="entry name" value="S24593"/>
</dbReference>
<dbReference type="RefSeq" id="NP_056749.1">
    <property type="nucleotide sequence ID" value="NC_001747.1"/>
</dbReference>
<dbReference type="PDB" id="6SCO">
    <property type="method" value="EM"/>
    <property type="resolution" value="3.30 A"/>
    <property type="chains" value="A/B/C=1-208"/>
</dbReference>
<dbReference type="PDB" id="7RLM">
    <property type="method" value="X-ray"/>
    <property type="resolution" value="3.30 A"/>
    <property type="chains" value="A=68-208"/>
</dbReference>
<dbReference type="PDBsum" id="6SCO"/>
<dbReference type="PDBsum" id="7RLM"/>
<dbReference type="SMR" id="P17522"/>
<dbReference type="KEGG" id="vg:1493891"/>
<dbReference type="Proteomes" id="UP000006723">
    <property type="component" value="Segment"/>
</dbReference>
<dbReference type="GO" id="GO:0039617">
    <property type="term" value="C:T=3 icosahedral viral capsid"/>
    <property type="evidence" value="ECO:0007669"/>
    <property type="project" value="UniProtKB-KW"/>
</dbReference>
<dbReference type="GO" id="GO:0005198">
    <property type="term" value="F:structural molecule activity"/>
    <property type="evidence" value="ECO:0007669"/>
    <property type="project" value="InterPro"/>
</dbReference>
<dbReference type="Gene3D" id="2.60.120.20">
    <property type="match status" value="1"/>
</dbReference>
<dbReference type="InterPro" id="IPR001517">
    <property type="entry name" value="Luteo_coat"/>
</dbReference>
<dbReference type="InterPro" id="IPR029053">
    <property type="entry name" value="Viral_coat"/>
</dbReference>
<dbReference type="Pfam" id="PF00894">
    <property type="entry name" value="Luteo_coat"/>
    <property type="match status" value="1"/>
</dbReference>
<dbReference type="PRINTS" id="PR00915">
    <property type="entry name" value="LUTEOGP1COAT"/>
</dbReference>
<feature type="chain" id="PRO_0000222412" description="Major capsid protein">
    <location>
        <begin position="1"/>
        <end position="208"/>
    </location>
</feature>
<feature type="region of interest" description="Disordered" evidence="2">
    <location>
        <begin position="1"/>
        <end position="68"/>
    </location>
</feature>
<feature type="compositionally biased region" description="Low complexity" evidence="2">
    <location>
        <begin position="1"/>
        <end position="17"/>
    </location>
</feature>
<feature type="compositionally biased region" description="Basic residues" evidence="2">
    <location>
        <begin position="18"/>
        <end position="30"/>
    </location>
</feature>
<feature type="compositionally biased region" description="Basic residues" evidence="2">
    <location>
        <begin position="44"/>
        <end position="61"/>
    </location>
</feature>
<feature type="strand" evidence="12">
    <location>
        <begin position="69"/>
        <end position="80"/>
    </location>
</feature>
<feature type="strand" evidence="12">
    <location>
        <begin position="84"/>
        <end position="90"/>
    </location>
</feature>
<feature type="helix" evidence="12">
    <location>
        <begin position="97"/>
        <end position="101"/>
    </location>
</feature>
<feature type="helix" evidence="12">
    <location>
        <begin position="103"/>
        <end position="105"/>
    </location>
</feature>
<feature type="strand" evidence="12">
    <location>
        <begin position="106"/>
        <end position="121"/>
    </location>
</feature>
<feature type="strand" evidence="12">
    <location>
        <begin position="130"/>
        <end position="136"/>
    </location>
</feature>
<feature type="strand" evidence="11">
    <location>
        <begin position="137"/>
        <end position="139"/>
    </location>
</feature>
<feature type="strand" evidence="12">
    <location>
        <begin position="148"/>
        <end position="152"/>
    </location>
</feature>
<feature type="turn" evidence="12">
    <location>
        <begin position="153"/>
        <end position="155"/>
    </location>
</feature>
<feature type="strand" evidence="12">
    <location>
        <begin position="157"/>
        <end position="162"/>
    </location>
</feature>
<feature type="helix" evidence="12">
    <location>
        <begin position="163"/>
        <end position="165"/>
    </location>
</feature>
<feature type="strand" evidence="12">
    <location>
        <begin position="179"/>
        <end position="185"/>
    </location>
</feature>
<feature type="strand" evidence="12">
    <location>
        <begin position="191"/>
        <end position="207"/>
    </location>
</feature>
<organism>
    <name type="scientific">Potato leafroll virus (strain Potato/Scotland/strain 1/1984)</name>
    <name type="common">PLrV</name>
    <dbReference type="NCBI Taxonomy" id="12046"/>
    <lineage>
        <taxon>Viruses</taxon>
        <taxon>Riboviria</taxon>
        <taxon>Orthornavirae</taxon>
        <taxon>Pisuviricota</taxon>
        <taxon>Pisoniviricetes</taxon>
        <taxon>Sobelivirales</taxon>
        <taxon>Solemoviridae</taxon>
        <taxon>Polerovirus</taxon>
        <taxon>Potato leafroll virus</taxon>
    </lineage>
</organism>
<gene>
    <name type="ORF">ORF3</name>
</gene>
<organismHost>
    <name type="scientific">Solanum tuberosum</name>
    <name type="common">Potato</name>
    <dbReference type="NCBI Taxonomy" id="4113"/>
</organismHost>